<evidence type="ECO:0000255" key="1">
    <source>
        <dbReference type="HAMAP-Rule" id="MF_00332"/>
    </source>
</evidence>
<evidence type="ECO:0000256" key="2">
    <source>
        <dbReference type="SAM" id="MobiDB-lite"/>
    </source>
</evidence>
<reference key="1">
    <citation type="journal article" date="2007" name="PLoS ONE">
        <title>Molecular correlates of host specialization in Staphylococcus aureus.</title>
        <authorList>
            <person name="Herron-Olson L."/>
            <person name="Fitzgerald J.R."/>
            <person name="Musser J.M."/>
            <person name="Kapur V."/>
        </authorList>
    </citation>
    <scope>NUCLEOTIDE SEQUENCE [LARGE SCALE GENOMIC DNA]</scope>
    <source>
        <strain>bovine RF122 / ET3-1</strain>
    </source>
</reference>
<keyword id="KW-0067">ATP-binding</keyword>
<keyword id="KW-0143">Chaperone</keyword>
<keyword id="KW-0547">Nucleotide-binding</keyword>
<keyword id="KW-0597">Phosphoprotein</keyword>
<keyword id="KW-0346">Stress response</keyword>
<name>DNAK_STAAB</name>
<accession>Q2YT47</accession>
<organism>
    <name type="scientific">Staphylococcus aureus (strain bovine RF122 / ET3-1)</name>
    <dbReference type="NCBI Taxonomy" id="273036"/>
    <lineage>
        <taxon>Bacteria</taxon>
        <taxon>Bacillati</taxon>
        <taxon>Bacillota</taxon>
        <taxon>Bacilli</taxon>
        <taxon>Bacillales</taxon>
        <taxon>Staphylococcaceae</taxon>
        <taxon>Staphylococcus</taxon>
    </lineage>
</organism>
<sequence>MSKIIGIDLGTTNSCVTVLEGDEPKVIQNPEGSRTTPSVVAFKNGETQVGEVAKRQAITNPNTVQSIKRHMGTDYKVDIEGKSYTPQEISAMILQNLKNTAESYLGEKVDKAVITVPAYFNDAERQATKDAGKIAGLEVERIINEPTAAALAYGLDKTDKDEKVLVFDLGGGTFDVSILELGDGVFEVLSTAGDNKLGGDDFDQVIIDYLVAEFKKENGVDLSQDKMALQRLKDAAEKAKKDLSGVSQTQISLPFISAGENGPLHLEVNLTRSKFEELSDSLIRRTMGPTRQAMKDAGLTNSDIDEVILVGGSTRIPAVQEAVKKEIGKETNKGVNPDEVVAMGAAIQGGVITGDVKDVVLLDVTPLSLGIEILGGRMNTLIERNTTIPTSKSQIYSTAVDNQPSVDVHVLQGERPMAADNKTLGRFQLTDIPPAERGKPQIEVTFDIDKNGIVNVTAKDLGTNKEQRITIQSSSSLSDEEIDRMVKDAEVNAEADKKRREEVDLRNEADSLVFQVEKTLTDLGENIGEEDKKSAEEKKDALKTALEGQDIEDIKSKKEELEKVIQELSAKVYEQVAQQQQQAQGANAGQNNDSTVEDAEFKEVKDDDKK</sequence>
<comment type="function">
    <text evidence="1">Acts as a chaperone.</text>
</comment>
<comment type="induction">
    <text evidence="1">By stress conditions e.g. heat shock.</text>
</comment>
<comment type="similarity">
    <text evidence="1">Belongs to the heat shock protein 70 family.</text>
</comment>
<dbReference type="EMBL" id="AJ938182">
    <property type="protein sequence ID" value="CAI81141.1"/>
    <property type="molecule type" value="Genomic_DNA"/>
</dbReference>
<dbReference type="RefSeq" id="WP_000034721.1">
    <property type="nucleotide sequence ID" value="NC_007622.1"/>
</dbReference>
<dbReference type="SMR" id="Q2YT47"/>
<dbReference type="KEGG" id="sab:SAB1452c"/>
<dbReference type="HOGENOM" id="CLU_005965_2_0_9"/>
<dbReference type="GO" id="GO:0005524">
    <property type="term" value="F:ATP binding"/>
    <property type="evidence" value="ECO:0007669"/>
    <property type="project" value="UniProtKB-UniRule"/>
</dbReference>
<dbReference type="GO" id="GO:0140662">
    <property type="term" value="F:ATP-dependent protein folding chaperone"/>
    <property type="evidence" value="ECO:0007669"/>
    <property type="project" value="InterPro"/>
</dbReference>
<dbReference type="GO" id="GO:0051082">
    <property type="term" value="F:unfolded protein binding"/>
    <property type="evidence" value="ECO:0007669"/>
    <property type="project" value="InterPro"/>
</dbReference>
<dbReference type="CDD" id="cd10234">
    <property type="entry name" value="ASKHA_NBD_HSP70_DnaK-like"/>
    <property type="match status" value="1"/>
</dbReference>
<dbReference type="FunFam" id="2.60.34.10:FF:000014">
    <property type="entry name" value="Chaperone protein DnaK HSP70"/>
    <property type="match status" value="1"/>
</dbReference>
<dbReference type="FunFam" id="1.20.1270.10:FF:000001">
    <property type="entry name" value="Molecular chaperone DnaK"/>
    <property type="match status" value="1"/>
</dbReference>
<dbReference type="FunFam" id="3.30.420.40:FF:000071">
    <property type="entry name" value="Molecular chaperone DnaK"/>
    <property type="match status" value="1"/>
</dbReference>
<dbReference type="FunFam" id="3.90.640.10:FF:000003">
    <property type="entry name" value="Molecular chaperone DnaK"/>
    <property type="match status" value="1"/>
</dbReference>
<dbReference type="Gene3D" id="1.20.1270.10">
    <property type="match status" value="1"/>
</dbReference>
<dbReference type="Gene3D" id="3.30.420.40">
    <property type="match status" value="2"/>
</dbReference>
<dbReference type="Gene3D" id="3.90.640.10">
    <property type="entry name" value="Actin, Chain A, domain 4"/>
    <property type="match status" value="1"/>
</dbReference>
<dbReference type="Gene3D" id="2.60.34.10">
    <property type="entry name" value="Substrate Binding Domain Of DNAk, Chain A, domain 1"/>
    <property type="match status" value="1"/>
</dbReference>
<dbReference type="HAMAP" id="MF_00332">
    <property type="entry name" value="DnaK"/>
    <property type="match status" value="1"/>
</dbReference>
<dbReference type="InterPro" id="IPR043129">
    <property type="entry name" value="ATPase_NBD"/>
</dbReference>
<dbReference type="InterPro" id="IPR012725">
    <property type="entry name" value="Chaperone_DnaK"/>
</dbReference>
<dbReference type="InterPro" id="IPR018181">
    <property type="entry name" value="Heat_shock_70_CS"/>
</dbReference>
<dbReference type="InterPro" id="IPR029048">
    <property type="entry name" value="HSP70_C_sf"/>
</dbReference>
<dbReference type="InterPro" id="IPR029047">
    <property type="entry name" value="HSP70_peptide-bd_sf"/>
</dbReference>
<dbReference type="InterPro" id="IPR013126">
    <property type="entry name" value="Hsp_70_fam"/>
</dbReference>
<dbReference type="NCBIfam" id="NF001413">
    <property type="entry name" value="PRK00290.1"/>
    <property type="match status" value="1"/>
</dbReference>
<dbReference type="NCBIfam" id="TIGR02350">
    <property type="entry name" value="prok_dnaK"/>
    <property type="match status" value="1"/>
</dbReference>
<dbReference type="PANTHER" id="PTHR19375">
    <property type="entry name" value="HEAT SHOCK PROTEIN 70KDA"/>
    <property type="match status" value="1"/>
</dbReference>
<dbReference type="Pfam" id="PF00012">
    <property type="entry name" value="HSP70"/>
    <property type="match status" value="1"/>
</dbReference>
<dbReference type="PRINTS" id="PR00301">
    <property type="entry name" value="HEATSHOCK70"/>
</dbReference>
<dbReference type="SUPFAM" id="SSF53067">
    <property type="entry name" value="Actin-like ATPase domain"/>
    <property type="match status" value="2"/>
</dbReference>
<dbReference type="SUPFAM" id="SSF100934">
    <property type="entry name" value="Heat shock protein 70kD (HSP70), C-terminal subdomain"/>
    <property type="match status" value="1"/>
</dbReference>
<dbReference type="SUPFAM" id="SSF100920">
    <property type="entry name" value="Heat shock protein 70kD (HSP70), peptide-binding domain"/>
    <property type="match status" value="1"/>
</dbReference>
<dbReference type="PROSITE" id="PS00297">
    <property type="entry name" value="HSP70_1"/>
    <property type="match status" value="1"/>
</dbReference>
<dbReference type="PROSITE" id="PS00329">
    <property type="entry name" value="HSP70_2"/>
    <property type="match status" value="1"/>
</dbReference>
<dbReference type="PROSITE" id="PS01036">
    <property type="entry name" value="HSP70_3"/>
    <property type="match status" value="1"/>
</dbReference>
<feature type="chain" id="PRO_1000059678" description="Chaperone protein DnaK">
    <location>
        <begin position="1"/>
        <end position="610"/>
    </location>
</feature>
<feature type="region of interest" description="Disordered" evidence="2">
    <location>
        <begin position="579"/>
        <end position="610"/>
    </location>
</feature>
<feature type="compositionally biased region" description="Low complexity" evidence="2">
    <location>
        <begin position="579"/>
        <end position="592"/>
    </location>
</feature>
<feature type="compositionally biased region" description="Basic and acidic residues" evidence="2">
    <location>
        <begin position="599"/>
        <end position="610"/>
    </location>
</feature>
<feature type="modified residue" description="Phosphothreonine; by autocatalysis" evidence="1">
    <location>
        <position position="173"/>
    </location>
</feature>
<protein>
    <recommendedName>
        <fullName evidence="1">Chaperone protein DnaK</fullName>
    </recommendedName>
    <alternativeName>
        <fullName evidence="1">HSP70</fullName>
    </alternativeName>
    <alternativeName>
        <fullName evidence="1">Heat shock 70 kDa protein</fullName>
    </alternativeName>
    <alternativeName>
        <fullName evidence="1">Heat shock protein 70</fullName>
    </alternativeName>
</protein>
<proteinExistence type="inferred from homology"/>
<gene>
    <name evidence="1" type="primary">dnaK</name>
    <name type="ordered locus">SAB1452c</name>
</gene>